<reference key="1">
    <citation type="journal article" date="2002" name="Proc. Natl. Acad. Sci. U.S.A.">
        <title>Complete genome sequence and comparative genomic analysis of an emerging human pathogen, serotype V Streptococcus agalactiae.</title>
        <authorList>
            <person name="Tettelin H."/>
            <person name="Masignani V."/>
            <person name="Cieslewicz M.J."/>
            <person name="Eisen J.A."/>
            <person name="Peterson S.N."/>
            <person name="Wessels M.R."/>
            <person name="Paulsen I.T."/>
            <person name="Nelson K.E."/>
            <person name="Margarit I."/>
            <person name="Read T.D."/>
            <person name="Madoff L.C."/>
            <person name="Wolf A.M."/>
            <person name="Beanan M.J."/>
            <person name="Brinkac L.M."/>
            <person name="Daugherty S.C."/>
            <person name="DeBoy R.T."/>
            <person name="Durkin A.S."/>
            <person name="Kolonay J.F."/>
            <person name="Madupu R."/>
            <person name="Lewis M.R."/>
            <person name="Radune D."/>
            <person name="Fedorova N.B."/>
            <person name="Scanlan D."/>
            <person name="Khouri H.M."/>
            <person name="Mulligan S."/>
            <person name="Carty H.A."/>
            <person name="Cline R.T."/>
            <person name="Van Aken S.E."/>
            <person name="Gill J."/>
            <person name="Scarselli M."/>
            <person name="Mora M."/>
            <person name="Iacobini E.T."/>
            <person name="Brettoni C."/>
            <person name="Galli G."/>
            <person name="Mariani M."/>
            <person name="Vegni F."/>
            <person name="Maione D."/>
            <person name="Rinaudo D."/>
            <person name="Rappuoli R."/>
            <person name="Telford J.L."/>
            <person name="Kasper D.L."/>
            <person name="Grandi G."/>
            <person name="Fraser C.M."/>
        </authorList>
    </citation>
    <scope>NUCLEOTIDE SEQUENCE [LARGE SCALE GENOMIC DNA]</scope>
    <source>
        <strain>ATCC BAA-611 / 2603 V/R</strain>
    </source>
</reference>
<sequence length="402" mass="42469">MKRFLKAWRKTSLIKKITIGVVIGLFLGILVPKASAIGLLGQLFVGGLKAIAPLLVFTLVISALSQHREGGKTNMSTIIGLYITATFAAALIAVVVNYIFPLTLILKTPAKTDLLPPKGISEVFQSLLLKIVDNPIHAITEANYMSILFWAVIFGLAMRSSNQRTKDLMQTFADATSQVVKWIINLAPIGIMGLVFTSISENGIGILGDYGLLILVLVGTMLFVALVVNPIIAFVMMRKNPYPLVLRCLKDSGITAFFTRSSAANIPVNMRLCEDLGLDKDTYSVSIPLGAAINMAGAAITINILTLAAVNTLGITVDFPTAFLLSVVAAVSACGASGVTGGSLLLIPVACSLFGISNDVAMQVVGVGFIVGVIQDSCETALNSSTDVLFTAVAEKSVFGKK</sequence>
<keyword id="KW-0029">Amino-acid transport</keyword>
<keyword id="KW-1003">Cell membrane</keyword>
<keyword id="KW-0472">Membrane</keyword>
<keyword id="KW-1185">Reference proteome</keyword>
<keyword id="KW-0769">Symport</keyword>
<keyword id="KW-0812">Transmembrane</keyword>
<keyword id="KW-1133">Transmembrane helix</keyword>
<keyword id="KW-0813">Transport</keyword>
<protein>
    <recommendedName>
        <fullName evidence="1">Serine/threonine transporter SstT</fullName>
    </recommendedName>
    <alternativeName>
        <fullName evidence="1">Na(+)/serine-threonine symporter</fullName>
    </alternativeName>
</protein>
<dbReference type="EMBL" id="AE009948">
    <property type="protein sequence ID" value="AAN00499.1"/>
    <property type="molecule type" value="Genomic_DNA"/>
</dbReference>
<dbReference type="RefSeq" id="NP_688626.1">
    <property type="nucleotide sequence ID" value="NC_004116.1"/>
</dbReference>
<dbReference type="RefSeq" id="WP_000819596.1">
    <property type="nucleotide sequence ID" value="NC_004116.1"/>
</dbReference>
<dbReference type="SMR" id="Q8DY58"/>
<dbReference type="STRING" id="208435.SAG1635"/>
<dbReference type="GeneID" id="66886479"/>
<dbReference type="KEGG" id="sag:SAG1635"/>
<dbReference type="PATRIC" id="fig|208435.3.peg.1646"/>
<dbReference type="HOGENOM" id="CLU_044581_0_0_9"/>
<dbReference type="OrthoDB" id="9768885at2"/>
<dbReference type="Proteomes" id="UP000000821">
    <property type="component" value="Chromosome"/>
</dbReference>
<dbReference type="GO" id="GO:0005886">
    <property type="term" value="C:plasma membrane"/>
    <property type="evidence" value="ECO:0007669"/>
    <property type="project" value="UniProtKB-SubCell"/>
</dbReference>
<dbReference type="GO" id="GO:0005295">
    <property type="term" value="F:neutral L-amino acid:sodium symporter activity"/>
    <property type="evidence" value="ECO:0007669"/>
    <property type="project" value="TreeGrafter"/>
</dbReference>
<dbReference type="GO" id="GO:0032329">
    <property type="term" value="P:serine transport"/>
    <property type="evidence" value="ECO:0007669"/>
    <property type="project" value="InterPro"/>
</dbReference>
<dbReference type="GO" id="GO:0015826">
    <property type="term" value="P:threonine transport"/>
    <property type="evidence" value="ECO:0007669"/>
    <property type="project" value="InterPro"/>
</dbReference>
<dbReference type="FunFam" id="1.10.3860.10:FF:000003">
    <property type="entry name" value="Serine/threonine transporter sstT"/>
    <property type="match status" value="1"/>
</dbReference>
<dbReference type="Gene3D" id="1.10.3860.10">
    <property type="entry name" value="Sodium:dicarboxylate symporter"/>
    <property type="match status" value="1"/>
</dbReference>
<dbReference type="HAMAP" id="MF_01582">
    <property type="entry name" value="Ser_Thr_transp_SstT"/>
    <property type="match status" value="1"/>
</dbReference>
<dbReference type="InterPro" id="IPR001991">
    <property type="entry name" value="Na-dicarboxylate_symporter"/>
</dbReference>
<dbReference type="InterPro" id="IPR036458">
    <property type="entry name" value="Na:dicarbo_symporter_sf"/>
</dbReference>
<dbReference type="InterPro" id="IPR023025">
    <property type="entry name" value="Ser_Thr_transp_SstT"/>
</dbReference>
<dbReference type="NCBIfam" id="NF010151">
    <property type="entry name" value="PRK13628.1"/>
    <property type="match status" value="1"/>
</dbReference>
<dbReference type="PANTHER" id="PTHR42865">
    <property type="entry name" value="PROTON/GLUTAMATE-ASPARTATE SYMPORTER"/>
    <property type="match status" value="1"/>
</dbReference>
<dbReference type="PANTHER" id="PTHR42865:SF8">
    <property type="entry name" value="SERINE_THREONINE TRANSPORTER SSTT"/>
    <property type="match status" value="1"/>
</dbReference>
<dbReference type="Pfam" id="PF00375">
    <property type="entry name" value="SDF"/>
    <property type="match status" value="1"/>
</dbReference>
<dbReference type="PRINTS" id="PR00173">
    <property type="entry name" value="EDTRNSPORT"/>
</dbReference>
<dbReference type="SUPFAM" id="SSF118215">
    <property type="entry name" value="Proton glutamate symport protein"/>
    <property type="match status" value="1"/>
</dbReference>
<evidence type="ECO:0000255" key="1">
    <source>
        <dbReference type="HAMAP-Rule" id="MF_01582"/>
    </source>
</evidence>
<accession>Q8DY58</accession>
<organism>
    <name type="scientific">Streptococcus agalactiae serotype V (strain ATCC BAA-611 / 2603 V/R)</name>
    <dbReference type="NCBI Taxonomy" id="208435"/>
    <lineage>
        <taxon>Bacteria</taxon>
        <taxon>Bacillati</taxon>
        <taxon>Bacillota</taxon>
        <taxon>Bacilli</taxon>
        <taxon>Lactobacillales</taxon>
        <taxon>Streptococcaceae</taxon>
        <taxon>Streptococcus</taxon>
    </lineage>
</organism>
<gene>
    <name evidence="1" type="primary">sstT</name>
    <name type="ordered locus">SAG1635</name>
</gene>
<comment type="function">
    <text evidence="1">Involved in the import of serine and threonine into the cell, with the concomitant import of sodium (symport system).</text>
</comment>
<comment type="catalytic activity">
    <reaction evidence="1">
        <text>L-serine(in) + Na(+)(in) = L-serine(out) + Na(+)(out)</text>
        <dbReference type="Rhea" id="RHEA:29575"/>
        <dbReference type="ChEBI" id="CHEBI:29101"/>
        <dbReference type="ChEBI" id="CHEBI:33384"/>
    </reaction>
    <physiologicalReaction direction="right-to-left" evidence="1">
        <dbReference type="Rhea" id="RHEA:29577"/>
    </physiologicalReaction>
</comment>
<comment type="catalytic activity">
    <reaction evidence="1">
        <text>L-threonine(in) + Na(+)(in) = L-threonine(out) + Na(+)(out)</text>
        <dbReference type="Rhea" id="RHEA:69999"/>
        <dbReference type="ChEBI" id="CHEBI:29101"/>
        <dbReference type="ChEBI" id="CHEBI:57926"/>
    </reaction>
    <physiologicalReaction direction="right-to-left" evidence="1">
        <dbReference type="Rhea" id="RHEA:70001"/>
    </physiologicalReaction>
</comment>
<comment type="subcellular location">
    <subcellularLocation>
        <location evidence="1">Cell membrane</location>
        <topology evidence="1">Multi-pass membrane protein</topology>
    </subcellularLocation>
</comment>
<comment type="similarity">
    <text evidence="1">Belongs to the dicarboxylate/amino acid:cation symporter (DAACS) (TC 2.A.23) family.</text>
</comment>
<proteinExistence type="inferred from homology"/>
<name>SSTT_STRA5</name>
<feature type="chain" id="PRO_0000309136" description="Serine/threonine transporter SstT">
    <location>
        <begin position="1"/>
        <end position="402"/>
    </location>
</feature>
<feature type="transmembrane region" description="Helical" evidence="1">
    <location>
        <begin position="19"/>
        <end position="39"/>
    </location>
</feature>
<feature type="transmembrane region" description="Helical" evidence="1">
    <location>
        <begin position="43"/>
        <end position="63"/>
    </location>
</feature>
<feature type="transmembrane region" description="Helical" evidence="1">
    <location>
        <begin position="86"/>
        <end position="106"/>
    </location>
</feature>
<feature type="transmembrane region" description="Helical" evidence="1">
    <location>
        <begin position="138"/>
        <end position="158"/>
    </location>
</feature>
<feature type="transmembrane region" description="Helical" evidence="1">
    <location>
        <begin position="179"/>
        <end position="199"/>
    </location>
</feature>
<feature type="transmembrane region" description="Helical" evidence="1">
    <location>
        <begin position="212"/>
        <end position="232"/>
    </location>
</feature>
<feature type="transmembrane region" description="Helical" evidence="1">
    <location>
        <begin position="287"/>
        <end position="307"/>
    </location>
</feature>
<feature type="transmembrane region" description="Helical" evidence="1">
    <location>
        <begin position="327"/>
        <end position="347"/>
    </location>
</feature>
<feature type="transmembrane region" description="Helical" evidence="1">
    <location>
        <begin position="354"/>
        <end position="374"/>
    </location>
</feature>